<sequence length="297" mass="34544">MAEAANVRQNLQNVPSIFEISASETLDNLIYPALSKIFDYFGLRLDFKLWGSLRIQEELSPLLTWLLQYLYLRKRASSFGESFYGLQRTVTTTGDLLNRRQQFASATLLTFMPYVERKLRTRITRHEDTSPWEQRLLSAFHAFHAAKAAHTFFYLVKYASNHSPIFRLLGLTLRYPSEPPKEDQWTYVVLKMLEVLAFFLQFVQWWYSNDQRRKVGGTLINPEAMPRKQLPKEVQQSLPQRGECPVCLLSIQTPTACSVSGYVFCWKCIVSHMKEHGTCPVTHYPISLDDLVRIYET</sequence>
<reference key="1">
    <citation type="journal article" date="2000" name="Science">
        <title>The genome sequence of Drosophila melanogaster.</title>
        <authorList>
            <person name="Adams M.D."/>
            <person name="Celniker S.E."/>
            <person name="Holt R.A."/>
            <person name="Evans C.A."/>
            <person name="Gocayne J.D."/>
            <person name="Amanatides P.G."/>
            <person name="Scherer S.E."/>
            <person name="Li P.W."/>
            <person name="Hoskins R.A."/>
            <person name="Galle R.F."/>
            <person name="George R.A."/>
            <person name="Lewis S.E."/>
            <person name="Richards S."/>
            <person name="Ashburner M."/>
            <person name="Henderson S.N."/>
            <person name="Sutton G.G."/>
            <person name="Wortman J.R."/>
            <person name="Yandell M.D."/>
            <person name="Zhang Q."/>
            <person name="Chen L.X."/>
            <person name="Brandon R.C."/>
            <person name="Rogers Y.-H.C."/>
            <person name="Blazej R.G."/>
            <person name="Champe M."/>
            <person name="Pfeiffer B.D."/>
            <person name="Wan K.H."/>
            <person name="Doyle C."/>
            <person name="Baxter E.G."/>
            <person name="Helt G."/>
            <person name="Nelson C.R."/>
            <person name="Miklos G.L.G."/>
            <person name="Abril J.F."/>
            <person name="Agbayani A."/>
            <person name="An H.-J."/>
            <person name="Andrews-Pfannkoch C."/>
            <person name="Baldwin D."/>
            <person name="Ballew R.M."/>
            <person name="Basu A."/>
            <person name="Baxendale J."/>
            <person name="Bayraktaroglu L."/>
            <person name="Beasley E.M."/>
            <person name="Beeson K.Y."/>
            <person name="Benos P.V."/>
            <person name="Berman B.P."/>
            <person name="Bhandari D."/>
            <person name="Bolshakov S."/>
            <person name="Borkova D."/>
            <person name="Botchan M.R."/>
            <person name="Bouck J."/>
            <person name="Brokstein P."/>
            <person name="Brottier P."/>
            <person name="Burtis K.C."/>
            <person name="Busam D.A."/>
            <person name="Butler H."/>
            <person name="Cadieu E."/>
            <person name="Center A."/>
            <person name="Chandra I."/>
            <person name="Cherry J.M."/>
            <person name="Cawley S."/>
            <person name="Dahlke C."/>
            <person name="Davenport L.B."/>
            <person name="Davies P."/>
            <person name="de Pablos B."/>
            <person name="Delcher A."/>
            <person name="Deng Z."/>
            <person name="Mays A.D."/>
            <person name="Dew I."/>
            <person name="Dietz S.M."/>
            <person name="Dodson K."/>
            <person name="Doup L.E."/>
            <person name="Downes M."/>
            <person name="Dugan-Rocha S."/>
            <person name="Dunkov B.C."/>
            <person name="Dunn P."/>
            <person name="Durbin K.J."/>
            <person name="Evangelista C.C."/>
            <person name="Ferraz C."/>
            <person name="Ferriera S."/>
            <person name="Fleischmann W."/>
            <person name="Fosler C."/>
            <person name="Gabrielian A.E."/>
            <person name="Garg N.S."/>
            <person name="Gelbart W.M."/>
            <person name="Glasser K."/>
            <person name="Glodek A."/>
            <person name="Gong F."/>
            <person name="Gorrell J.H."/>
            <person name="Gu Z."/>
            <person name="Guan P."/>
            <person name="Harris M."/>
            <person name="Harris N.L."/>
            <person name="Harvey D.A."/>
            <person name="Heiman T.J."/>
            <person name="Hernandez J.R."/>
            <person name="Houck J."/>
            <person name="Hostin D."/>
            <person name="Houston K.A."/>
            <person name="Howland T.J."/>
            <person name="Wei M.-H."/>
            <person name="Ibegwam C."/>
            <person name="Jalali M."/>
            <person name="Kalush F."/>
            <person name="Karpen G.H."/>
            <person name="Ke Z."/>
            <person name="Kennison J.A."/>
            <person name="Ketchum K.A."/>
            <person name="Kimmel B.E."/>
            <person name="Kodira C.D."/>
            <person name="Kraft C.L."/>
            <person name="Kravitz S."/>
            <person name="Kulp D."/>
            <person name="Lai Z."/>
            <person name="Lasko P."/>
            <person name="Lei Y."/>
            <person name="Levitsky A.A."/>
            <person name="Li J.H."/>
            <person name="Li Z."/>
            <person name="Liang Y."/>
            <person name="Lin X."/>
            <person name="Liu X."/>
            <person name="Mattei B."/>
            <person name="McIntosh T.C."/>
            <person name="McLeod M.P."/>
            <person name="McPherson D."/>
            <person name="Merkulov G."/>
            <person name="Milshina N.V."/>
            <person name="Mobarry C."/>
            <person name="Morris J."/>
            <person name="Moshrefi A."/>
            <person name="Mount S.M."/>
            <person name="Moy M."/>
            <person name="Murphy B."/>
            <person name="Murphy L."/>
            <person name="Muzny D.M."/>
            <person name="Nelson D.L."/>
            <person name="Nelson D.R."/>
            <person name="Nelson K.A."/>
            <person name="Nixon K."/>
            <person name="Nusskern D.R."/>
            <person name="Pacleb J.M."/>
            <person name="Palazzolo M."/>
            <person name="Pittman G.S."/>
            <person name="Pan S."/>
            <person name="Pollard J."/>
            <person name="Puri V."/>
            <person name="Reese M.G."/>
            <person name="Reinert K."/>
            <person name="Remington K."/>
            <person name="Saunders R.D.C."/>
            <person name="Scheeler F."/>
            <person name="Shen H."/>
            <person name="Shue B.C."/>
            <person name="Siden-Kiamos I."/>
            <person name="Simpson M."/>
            <person name="Skupski M.P."/>
            <person name="Smith T.J."/>
            <person name="Spier E."/>
            <person name="Spradling A.C."/>
            <person name="Stapleton M."/>
            <person name="Strong R."/>
            <person name="Sun E."/>
            <person name="Svirskas R."/>
            <person name="Tector C."/>
            <person name="Turner R."/>
            <person name="Venter E."/>
            <person name="Wang A.H."/>
            <person name="Wang X."/>
            <person name="Wang Z.-Y."/>
            <person name="Wassarman D.A."/>
            <person name="Weinstock G.M."/>
            <person name="Weissenbach J."/>
            <person name="Williams S.M."/>
            <person name="Woodage T."/>
            <person name="Worley K.C."/>
            <person name="Wu D."/>
            <person name="Yang S."/>
            <person name="Yao Q.A."/>
            <person name="Ye J."/>
            <person name="Yeh R.-F."/>
            <person name="Zaveri J.S."/>
            <person name="Zhan M."/>
            <person name="Zhang G."/>
            <person name="Zhao Q."/>
            <person name="Zheng L."/>
            <person name="Zheng X.H."/>
            <person name="Zhong F.N."/>
            <person name="Zhong W."/>
            <person name="Zhou X."/>
            <person name="Zhu S.C."/>
            <person name="Zhu X."/>
            <person name="Smith H.O."/>
            <person name="Gibbs R.A."/>
            <person name="Myers E.W."/>
            <person name="Rubin G.M."/>
            <person name="Venter J.C."/>
        </authorList>
    </citation>
    <scope>NUCLEOTIDE SEQUENCE [LARGE SCALE GENOMIC DNA]</scope>
    <source>
        <strain>Berkeley</strain>
    </source>
</reference>
<reference key="2">
    <citation type="journal article" date="2002" name="Genome Biol.">
        <title>Annotation of the Drosophila melanogaster euchromatic genome: a systematic review.</title>
        <authorList>
            <person name="Misra S."/>
            <person name="Crosby M.A."/>
            <person name="Mungall C.J."/>
            <person name="Matthews B.B."/>
            <person name="Campbell K.S."/>
            <person name="Hradecky P."/>
            <person name="Huang Y."/>
            <person name="Kaminker J.S."/>
            <person name="Millburn G.H."/>
            <person name="Prochnik S.E."/>
            <person name="Smith C.D."/>
            <person name="Tupy J.L."/>
            <person name="Whitfield E.J."/>
            <person name="Bayraktaroglu L."/>
            <person name="Berman B.P."/>
            <person name="Bettencourt B.R."/>
            <person name="Celniker S.E."/>
            <person name="de Grey A.D.N.J."/>
            <person name="Drysdale R.A."/>
            <person name="Harris N.L."/>
            <person name="Richter J."/>
            <person name="Russo S."/>
            <person name="Schroeder A.J."/>
            <person name="Shu S.Q."/>
            <person name="Stapleton M."/>
            <person name="Yamada C."/>
            <person name="Ashburner M."/>
            <person name="Gelbart W.M."/>
            <person name="Rubin G.M."/>
            <person name="Lewis S.E."/>
        </authorList>
    </citation>
    <scope>GENOME REANNOTATION</scope>
    <source>
        <strain>Berkeley</strain>
    </source>
</reference>
<reference key="3">
    <citation type="submission" date="2005-05" db="EMBL/GenBank/DDBJ databases">
        <authorList>
            <person name="Stapleton M."/>
            <person name="Carlson J.W."/>
            <person name="Chavez C."/>
            <person name="Frise E."/>
            <person name="George R.A."/>
            <person name="Pacleb J.M."/>
            <person name="Park S."/>
            <person name="Wan K.H."/>
            <person name="Yu C."/>
            <person name="Celniker S.E."/>
        </authorList>
    </citation>
    <scope>NUCLEOTIDE SEQUENCE [LARGE SCALE MRNA]</scope>
    <source>
        <strain>Berkeley</strain>
    </source>
</reference>
<reference key="4">
    <citation type="journal article" date="2011" name="Dis. Model. Mech.">
        <title>A Drosophila model for the Zellweger spectrum of peroxisome biogenesis disorders.</title>
        <authorList>
            <person name="Mast F.D."/>
            <person name="Li J."/>
            <person name="Virk M.K."/>
            <person name="Hughes S.C."/>
            <person name="Simmonds A.J."/>
            <person name="Rachubinski R.A."/>
        </authorList>
    </citation>
    <scope>FUNCTION</scope>
</reference>
<evidence type="ECO:0000250" key="1">
    <source>
        <dbReference type="UniProtKB" id="G2Q5N0"/>
    </source>
</evidence>
<evidence type="ECO:0000250" key="2">
    <source>
        <dbReference type="UniProtKB" id="O00623"/>
    </source>
</evidence>
<evidence type="ECO:0000250" key="3">
    <source>
        <dbReference type="UniProtKB" id="Q04370"/>
    </source>
</evidence>
<evidence type="ECO:0000255" key="4"/>
<evidence type="ECO:0000269" key="5">
    <source>
    </source>
</evidence>
<evidence type="ECO:0000305" key="6"/>
<protein>
    <recommendedName>
        <fullName evidence="6">Peroxisome assembly protein 12</fullName>
    </recommendedName>
    <alternativeName>
        <fullName evidence="6">Peroxin-12</fullName>
    </alternativeName>
</protein>
<organism>
    <name type="scientific">Drosophila melanogaster</name>
    <name type="common">Fruit fly</name>
    <dbReference type="NCBI Taxonomy" id="7227"/>
    <lineage>
        <taxon>Eukaryota</taxon>
        <taxon>Metazoa</taxon>
        <taxon>Ecdysozoa</taxon>
        <taxon>Arthropoda</taxon>
        <taxon>Hexapoda</taxon>
        <taxon>Insecta</taxon>
        <taxon>Pterygota</taxon>
        <taxon>Neoptera</taxon>
        <taxon>Endopterygota</taxon>
        <taxon>Diptera</taxon>
        <taxon>Brachycera</taxon>
        <taxon>Muscomorpha</taxon>
        <taxon>Ephydroidea</taxon>
        <taxon>Drosophilidae</taxon>
        <taxon>Drosophila</taxon>
        <taxon>Sophophora</taxon>
    </lineage>
</organism>
<keyword id="KW-0472">Membrane</keyword>
<keyword id="KW-0479">Metal-binding</keyword>
<keyword id="KW-0576">Peroxisome</keyword>
<keyword id="KW-0653">Protein transport</keyword>
<keyword id="KW-1185">Reference proteome</keyword>
<keyword id="KW-0812">Transmembrane</keyword>
<keyword id="KW-1133">Transmembrane helix</keyword>
<keyword id="KW-0813">Transport</keyword>
<keyword id="KW-0833">Ubl conjugation pathway</keyword>
<keyword id="KW-0862">Zinc</keyword>
<keyword id="KW-0863">Zinc-finger</keyword>
<feature type="chain" id="PRO_0000218614" description="Peroxisome assembly protein 12">
    <location>
        <begin position="1"/>
        <end position="297"/>
    </location>
</feature>
<feature type="topological domain" description="Peroxisomal matrix" evidence="1">
    <location>
        <begin position="1"/>
        <end position="16"/>
    </location>
</feature>
<feature type="transmembrane region" description="Helical; Name=TM1" evidence="1">
    <location>
        <begin position="17"/>
        <end position="44"/>
    </location>
</feature>
<feature type="topological domain" description="Cytoplasmic" evidence="1">
    <location>
        <begin position="45"/>
        <end position="48"/>
    </location>
</feature>
<feature type="transmembrane region" description="Helical; Name=TM2" evidence="1">
    <location>
        <begin position="49"/>
        <end position="73"/>
    </location>
</feature>
<feature type="topological domain" description="Peroxisomal matrix" evidence="1">
    <location>
        <begin position="74"/>
        <end position="98"/>
    </location>
</feature>
<feature type="transmembrane region" description="Helical; Name=TM3" evidence="1">
    <location>
        <begin position="99"/>
        <end position="119"/>
    </location>
</feature>
<feature type="topological domain" description="Cytoplasmic" evidence="1">
    <location>
        <begin position="120"/>
        <end position="124"/>
    </location>
</feature>
<feature type="transmembrane region" description="Helical; Name=TM4" evidence="1">
    <location>
        <begin position="125"/>
        <end position="158"/>
    </location>
</feature>
<feature type="topological domain" description="Peroxisomal matrix" evidence="1">
    <location>
        <begin position="159"/>
        <end position="191"/>
    </location>
</feature>
<feature type="transmembrane region" description="Helical; Name=TM5" evidence="1">
    <location>
        <begin position="192"/>
        <end position="219"/>
    </location>
</feature>
<feature type="topological domain" description="Cytoplasmic" evidence="1">
    <location>
        <begin position="220"/>
        <end position="297"/>
    </location>
</feature>
<feature type="zinc finger region" description="RING-type; degenerate">
    <location>
        <begin position="244"/>
        <end position="283"/>
    </location>
</feature>
<feature type="binding site" evidence="1">
    <location>
        <position position="244"/>
    </location>
    <ligand>
        <name>Zn(2+)</name>
        <dbReference type="ChEBI" id="CHEBI:29105"/>
    </ligand>
</feature>
<feature type="binding site" evidence="1">
    <location>
        <position position="247"/>
    </location>
    <ligand>
        <name>Zn(2+)</name>
        <dbReference type="ChEBI" id="CHEBI:29105"/>
    </ligand>
</feature>
<feature type="binding site" evidence="1">
    <location>
        <position position="265"/>
    </location>
    <ligand>
        <name>Zn(2+)</name>
        <dbReference type="ChEBI" id="CHEBI:29105"/>
    </ligand>
</feature>
<feature type="binding site" evidence="1">
    <location>
        <position position="268"/>
    </location>
    <ligand>
        <name>Zn(2+)</name>
        <dbReference type="ChEBI" id="CHEBI:29105"/>
    </ligand>
</feature>
<gene>
    <name type="primary">Pex12</name>
    <name type="ORF">CG3639</name>
</gene>
<comment type="function">
    <text evidence="2 3 5">Component of a retrotranslocation channel required for peroxisome organization by mediating export of the PEX5 receptor from peroxisomes to the cytosol, thereby promoting PEX5 recycling (PubMed:21669930). The retrotranslocation channel is composed of PEX2, PEX10 and PEX12; each subunit contributing transmembrane segments that coassemble into an open channel that specifically allows the passage of PEX5 through the peroxisomal membrane (By similarity). PEX12 also regulates PEX5 recycling by activating the E3 ubiquitin-protein ligase activity of PEX10 (By similarity). When PEX5 recycling is compromised, PEX12 stimulates PEX10-mediated polyubiquitination of PEX5, leading to its subsequent degradation (By similarity).</text>
</comment>
<comment type="pathway">
    <text evidence="2">Protein modification; protein ubiquitination.</text>
</comment>
<comment type="subunit">
    <text evidence="2">Component of the PEX2-PEX10-PEX12 retrotranslocation channel.</text>
</comment>
<comment type="subcellular location">
    <subcellularLocation>
        <location evidence="2">Peroxisome membrane</location>
        <topology evidence="4">Multi-pass membrane protein</topology>
    </subcellularLocation>
</comment>
<comment type="domain">
    <text evidence="1">The three subunits of the retrotranslocation channel (PEX2, PEX10 and PEX12) coassemble in the membrane into a channel with an open 10 Angstrom pore. The RING-type zinc-fingers that catalyze PEX5 receptor ubiquitination are positioned above the pore on the cytosolic side of the complex.</text>
</comment>
<comment type="domain">
    <text evidence="3">The RING-type zinc-finger is degenerated and only coordinates one zinc ions, preventing E3 ubiquitin-protein ligase activity.</text>
</comment>
<comment type="similarity">
    <text evidence="6">Belongs to the pex2/pex10/pex12 family.</text>
</comment>
<dbReference type="EMBL" id="AE014134">
    <property type="protein sequence ID" value="AAF51456.1"/>
    <property type="molecule type" value="Genomic_DNA"/>
</dbReference>
<dbReference type="EMBL" id="BT023302">
    <property type="protein sequence ID" value="AAY55718.1"/>
    <property type="molecule type" value="mRNA"/>
</dbReference>
<dbReference type="RefSeq" id="NP_001259844.1">
    <property type="nucleotide sequence ID" value="NM_001272915.1"/>
</dbReference>
<dbReference type="RefSeq" id="NP_608546.1">
    <property type="nucleotide sequence ID" value="NM_134702.3"/>
</dbReference>
<dbReference type="SMR" id="Q9VPT5"/>
<dbReference type="ComplexPortal" id="CPX-10332">
    <property type="entry name" value="PEX2-PEX10-PEX12 ubiquitin ligase complex"/>
</dbReference>
<dbReference type="FunCoup" id="Q9VPT5">
    <property type="interactions" value="1503"/>
</dbReference>
<dbReference type="IntAct" id="Q9VPT5">
    <property type="interactions" value="1"/>
</dbReference>
<dbReference type="STRING" id="7227.FBpp0305188"/>
<dbReference type="PaxDb" id="7227-FBpp0305188"/>
<dbReference type="DNASU" id="33256"/>
<dbReference type="EnsemblMetazoa" id="FBtr0078010">
    <property type="protein sequence ID" value="FBpp0077675"/>
    <property type="gene ID" value="FBgn0031282"/>
</dbReference>
<dbReference type="EnsemblMetazoa" id="FBtr0332972">
    <property type="protein sequence ID" value="FBpp0305188"/>
    <property type="gene ID" value="FBgn0031282"/>
</dbReference>
<dbReference type="GeneID" id="33256"/>
<dbReference type="KEGG" id="dme:Dmel_CG3639"/>
<dbReference type="UCSC" id="CG3639-RA">
    <property type="organism name" value="d. melanogaster"/>
</dbReference>
<dbReference type="AGR" id="FB:FBgn0031282"/>
<dbReference type="CTD" id="5193"/>
<dbReference type="FlyBase" id="FBgn0031282">
    <property type="gene designation" value="Pex12"/>
</dbReference>
<dbReference type="VEuPathDB" id="VectorBase:FBgn0031282"/>
<dbReference type="eggNOG" id="KOG0826">
    <property type="taxonomic scope" value="Eukaryota"/>
</dbReference>
<dbReference type="GeneTree" id="ENSGT00390000016209"/>
<dbReference type="HOGENOM" id="CLU_031067_1_0_1"/>
<dbReference type="InParanoid" id="Q9VPT5"/>
<dbReference type="OMA" id="VYCWKCI"/>
<dbReference type="OrthoDB" id="107372at2759"/>
<dbReference type="PhylomeDB" id="Q9VPT5"/>
<dbReference type="Reactome" id="R-DME-8866654">
    <property type="pathway name" value="E3 ubiquitin ligases ubiquitinate target proteins"/>
</dbReference>
<dbReference type="Reactome" id="R-DME-9033241">
    <property type="pathway name" value="Peroxisomal protein import"/>
</dbReference>
<dbReference type="Reactome" id="R-DME-9603798">
    <property type="pathway name" value="Class I peroxisomal membrane protein import"/>
</dbReference>
<dbReference type="SignaLink" id="Q9VPT5"/>
<dbReference type="UniPathway" id="UPA00143"/>
<dbReference type="BioGRID-ORCS" id="33256">
    <property type="hits" value="0 hits in 1 CRISPR screen"/>
</dbReference>
<dbReference type="GenomeRNAi" id="33256"/>
<dbReference type="PRO" id="PR:Q9VPT5"/>
<dbReference type="Proteomes" id="UP000000803">
    <property type="component" value="Chromosome 2L"/>
</dbReference>
<dbReference type="Bgee" id="FBgn0031282">
    <property type="expression patterns" value="Expressed in adult enteroendocrine precursor cell in adult midgut (Drosophila) and 38 other cell types or tissues"/>
</dbReference>
<dbReference type="ExpressionAtlas" id="Q9VPT5">
    <property type="expression patterns" value="baseline and differential"/>
</dbReference>
<dbReference type="GO" id="GO:1990429">
    <property type="term" value="C:peroxisomal importomer complex"/>
    <property type="evidence" value="ECO:0000318"/>
    <property type="project" value="GO_Central"/>
</dbReference>
<dbReference type="GO" id="GO:0005778">
    <property type="term" value="C:peroxisomal membrane"/>
    <property type="evidence" value="ECO:0000250"/>
    <property type="project" value="FlyBase"/>
</dbReference>
<dbReference type="GO" id="GO:0005777">
    <property type="term" value="C:peroxisome"/>
    <property type="evidence" value="ECO:0000314"/>
    <property type="project" value="FlyBase"/>
</dbReference>
<dbReference type="GO" id="GO:0008320">
    <property type="term" value="F:protein transmembrane transporter activity"/>
    <property type="evidence" value="ECO:0000250"/>
    <property type="project" value="FlyBase"/>
</dbReference>
<dbReference type="GO" id="GO:0061630">
    <property type="term" value="F:ubiquitin protein ligase activity"/>
    <property type="evidence" value="ECO:0000250"/>
    <property type="project" value="FlyBase"/>
</dbReference>
<dbReference type="GO" id="GO:0004842">
    <property type="term" value="F:ubiquitin-protein transferase activity"/>
    <property type="evidence" value="ECO:0000318"/>
    <property type="project" value="GO_Central"/>
</dbReference>
<dbReference type="GO" id="GO:0008270">
    <property type="term" value="F:zinc ion binding"/>
    <property type="evidence" value="ECO:0007669"/>
    <property type="project" value="UniProtKB-KW"/>
</dbReference>
<dbReference type="GO" id="GO:0007031">
    <property type="term" value="P:peroxisome organization"/>
    <property type="evidence" value="ECO:0000315"/>
    <property type="project" value="FlyBase"/>
</dbReference>
<dbReference type="GO" id="GO:0016558">
    <property type="term" value="P:protein import into peroxisome matrix"/>
    <property type="evidence" value="ECO:0000318"/>
    <property type="project" value="GO_Central"/>
</dbReference>
<dbReference type="GO" id="GO:0016562">
    <property type="term" value="P:protein import into peroxisome matrix, receptor recycling"/>
    <property type="evidence" value="ECO:0000250"/>
    <property type="project" value="FlyBase"/>
</dbReference>
<dbReference type="GO" id="GO:0006513">
    <property type="term" value="P:protein monoubiquitination"/>
    <property type="evidence" value="ECO:0000318"/>
    <property type="project" value="GO_Central"/>
</dbReference>
<dbReference type="GO" id="GO:0000209">
    <property type="term" value="P:protein polyubiquitination"/>
    <property type="evidence" value="ECO:0000250"/>
    <property type="project" value="FlyBase"/>
</dbReference>
<dbReference type="CDD" id="cd16451">
    <property type="entry name" value="mRING_PEX12"/>
    <property type="match status" value="1"/>
</dbReference>
<dbReference type="FunFam" id="3.30.40.10:FF:000634">
    <property type="entry name" value="Peroxisome assembly protein 12"/>
    <property type="match status" value="1"/>
</dbReference>
<dbReference type="Gene3D" id="3.30.40.10">
    <property type="entry name" value="Zinc/RING finger domain, C3HC4 (zinc finger)"/>
    <property type="match status" value="1"/>
</dbReference>
<dbReference type="InterPro" id="IPR017375">
    <property type="entry name" value="PEX12"/>
</dbReference>
<dbReference type="InterPro" id="IPR006845">
    <property type="entry name" value="Pex_N"/>
</dbReference>
<dbReference type="InterPro" id="IPR013083">
    <property type="entry name" value="Znf_RING/FYVE/PHD"/>
</dbReference>
<dbReference type="PANTHER" id="PTHR12888:SF0">
    <property type="entry name" value="PEROXISOME ASSEMBLY PROTEIN 12"/>
    <property type="match status" value="1"/>
</dbReference>
<dbReference type="PANTHER" id="PTHR12888">
    <property type="entry name" value="PEROXISOME ASSEMBLY PROTEIN 12 PEROXIN-12"/>
    <property type="match status" value="1"/>
</dbReference>
<dbReference type="Pfam" id="PF04757">
    <property type="entry name" value="Pex2_Pex12"/>
    <property type="match status" value="1"/>
</dbReference>
<dbReference type="PIRSF" id="PIRSF038074">
    <property type="entry name" value="Peroxisome_assembly_p12"/>
    <property type="match status" value="1"/>
</dbReference>
<dbReference type="SUPFAM" id="SSF57850">
    <property type="entry name" value="RING/U-box"/>
    <property type="match status" value="1"/>
</dbReference>
<proteinExistence type="evidence at transcript level"/>
<name>PEX12_DROME</name>
<accession>Q9VPT5</accession>
<accession>Q4V3Q4</accession>